<comment type="function">
    <text evidence="1">Involved in control of chromosome replication initiation. Inhibits the cooperative binding of DnaA to the oriC region, thus negatively regulating initiation of chromosome replication. Inhibits the ability of DnaA-ATP to form a helix on DNA; does not disassemble preformed DnaA-DNA helices. Decreases the residence time of DnaA on the chromosome at its binding sites (oriC, replication forks and promoter-binding sites). Tethers DnaA to the replication machinery via the DNA polymerase beta sliding clamp subunit (dnaN). Associates with oriC and other DnaA targets on the chromosome in a DnaA-dependent manner.</text>
</comment>
<comment type="cofactor">
    <cofactor evidence="1">
        <name>Zn(2+)</name>
        <dbReference type="ChEBI" id="CHEBI:29105"/>
    </cofactor>
    <text evidence="1">Binds 1 zinc ion per subunit.</text>
</comment>
<comment type="subunit">
    <text evidence="1">Homotetramer. Interacts with both DnaA and DnaN, acting as a bridge between these two proteins.</text>
</comment>
<comment type="subcellular location">
    <subcellularLocation>
        <location evidence="1">Cytoplasm</location>
        <location evidence="1">Nucleoid</location>
    </subcellularLocation>
    <text evidence="1">Localizes in tight foci, which correspond to the replisome at mid-cell throughout the cell cycle.</text>
</comment>
<comment type="similarity">
    <text evidence="1">Belongs to the YabA family.</text>
</comment>
<reference key="1">
    <citation type="journal article" date="2005" name="J. Bacteriol.">
        <title>Insights on evolution of virulence and resistance from the complete genome analysis of an early methicillin-resistant Staphylococcus aureus strain and a biofilm-producing methicillin-resistant Staphylococcus epidermidis strain.</title>
        <authorList>
            <person name="Gill S.R."/>
            <person name="Fouts D.E."/>
            <person name="Archer G.L."/>
            <person name="Mongodin E.F."/>
            <person name="DeBoy R.T."/>
            <person name="Ravel J."/>
            <person name="Paulsen I.T."/>
            <person name="Kolonay J.F."/>
            <person name="Brinkac L.M."/>
            <person name="Beanan M.J."/>
            <person name="Dodson R.J."/>
            <person name="Daugherty S.C."/>
            <person name="Madupu R."/>
            <person name="Angiuoli S.V."/>
            <person name="Durkin A.S."/>
            <person name="Haft D.H."/>
            <person name="Vamathevan J.J."/>
            <person name="Khouri H."/>
            <person name="Utterback T.R."/>
            <person name="Lee C."/>
            <person name="Dimitrov G."/>
            <person name="Jiang L."/>
            <person name="Qin H."/>
            <person name="Weidman J."/>
            <person name="Tran K."/>
            <person name="Kang K.H."/>
            <person name="Hance I.R."/>
            <person name="Nelson K.E."/>
            <person name="Fraser C.M."/>
        </authorList>
    </citation>
    <scope>NUCLEOTIDE SEQUENCE [LARGE SCALE GENOMIC DNA]</scope>
    <source>
        <strain>COL</strain>
    </source>
</reference>
<dbReference type="EMBL" id="CP000046">
    <property type="protein sequence ID" value="AAW37647.1"/>
    <property type="molecule type" value="Genomic_DNA"/>
</dbReference>
<dbReference type="RefSeq" id="WP_000375686.1">
    <property type="nucleotide sequence ID" value="NZ_JBGOFO010000012.1"/>
</dbReference>
<dbReference type="SMR" id="Q5HIJ1"/>
<dbReference type="KEGG" id="sac:SACOL0528"/>
<dbReference type="HOGENOM" id="CLU_157169_1_0_9"/>
<dbReference type="Proteomes" id="UP000000530">
    <property type="component" value="Chromosome"/>
</dbReference>
<dbReference type="GO" id="GO:0009295">
    <property type="term" value="C:nucleoid"/>
    <property type="evidence" value="ECO:0007669"/>
    <property type="project" value="UniProtKB-SubCell"/>
</dbReference>
<dbReference type="GO" id="GO:0006260">
    <property type="term" value="P:DNA replication"/>
    <property type="evidence" value="ECO:0007669"/>
    <property type="project" value="UniProtKB-UniRule"/>
</dbReference>
<dbReference type="HAMAP" id="MF_01159">
    <property type="entry name" value="YabA"/>
    <property type="match status" value="1"/>
</dbReference>
<dbReference type="InterPro" id="IPR010377">
    <property type="entry name" value="YabA"/>
</dbReference>
<dbReference type="NCBIfam" id="NF009641">
    <property type="entry name" value="PRK13169.1-2"/>
    <property type="match status" value="1"/>
</dbReference>
<dbReference type="Pfam" id="PF06156">
    <property type="entry name" value="YabA"/>
    <property type="match status" value="1"/>
</dbReference>
<dbReference type="PIRSF" id="PIRSF021439">
    <property type="entry name" value="DUF972"/>
    <property type="match status" value="1"/>
</dbReference>
<protein>
    <recommendedName>
        <fullName evidence="1">Replication initiation control protein YabA</fullName>
    </recommendedName>
</protein>
<gene>
    <name evidence="1" type="primary">yabA</name>
    <name type="ordered locus">SACOL0528</name>
</gene>
<sequence>MDRNEIFEKIMRLEMNVNQLSKETSELKALAVELVEENVALQLENDNLKKVLGNDEPTTIDTANSKPAKAVKKPLPSKDNLAILYGEGFHICKGELFGKHRHGEDCLFCLEVLSD</sequence>
<name>YABA_STAAC</name>
<organism>
    <name type="scientific">Staphylococcus aureus (strain COL)</name>
    <dbReference type="NCBI Taxonomy" id="93062"/>
    <lineage>
        <taxon>Bacteria</taxon>
        <taxon>Bacillati</taxon>
        <taxon>Bacillota</taxon>
        <taxon>Bacilli</taxon>
        <taxon>Bacillales</taxon>
        <taxon>Staphylococcaceae</taxon>
        <taxon>Staphylococcus</taxon>
    </lineage>
</organism>
<proteinExistence type="inferred from homology"/>
<feature type="chain" id="PRO_0000211915" description="Replication initiation control protein YabA">
    <location>
        <begin position="1"/>
        <end position="115"/>
    </location>
</feature>
<feature type="binding site" evidence="1">
    <location>
        <position position="90"/>
    </location>
    <ligand>
        <name>Zn(2+)</name>
        <dbReference type="ChEBI" id="CHEBI:29105"/>
    </ligand>
</feature>
<feature type="binding site" evidence="1">
    <location>
        <position position="92"/>
    </location>
    <ligand>
        <name>Zn(2+)</name>
        <dbReference type="ChEBI" id="CHEBI:29105"/>
    </ligand>
</feature>
<feature type="binding site" evidence="1">
    <location>
        <position position="106"/>
    </location>
    <ligand>
        <name>Zn(2+)</name>
        <dbReference type="ChEBI" id="CHEBI:29105"/>
    </ligand>
</feature>
<feature type="binding site" evidence="1">
    <location>
        <position position="109"/>
    </location>
    <ligand>
        <name>Zn(2+)</name>
        <dbReference type="ChEBI" id="CHEBI:29105"/>
    </ligand>
</feature>
<keyword id="KW-0963">Cytoplasm</keyword>
<keyword id="KW-0235">DNA replication</keyword>
<keyword id="KW-0236">DNA replication inhibitor</keyword>
<keyword id="KW-0479">Metal-binding</keyword>
<keyword id="KW-0862">Zinc</keyword>
<accession>Q5HIJ1</accession>
<evidence type="ECO:0000255" key="1">
    <source>
        <dbReference type="HAMAP-Rule" id="MF_01159"/>
    </source>
</evidence>